<proteinExistence type="inferred from homology"/>
<reference key="1">
    <citation type="journal article" date="2004" name="Nat. Genet.">
        <title>Reductive evolution suggested from the complete genome sequence of a plant-pathogenic phytoplasma.</title>
        <authorList>
            <person name="Oshima K."/>
            <person name="Kakizawa S."/>
            <person name="Nishigawa H."/>
            <person name="Jung H.-Y."/>
            <person name="Wei W."/>
            <person name="Suzuki S."/>
            <person name="Arashida R."/>
            <person name="Nakata D."/>
            <person name="Miyata S."/>
            <person name="Ugaki M."/>
            <person name="Namba S."/>
        </authorList>
    </citation>
    <scope>NUCLEOTIDE SEQUENCE [LARGE SCALE GENOMIC DNA]</scope>
    <source>
        <strain>OY-M</strain>
    </source>
</reference>
<name>YQGF_ONYPE</name>
<dbReference type="EC" id="3.1.-.-" evidence="1"/>
<dbReference type="EMBL" id="AP006628">
    <property type="protein sequence ID" value="BAD04389.1"/>
    <property type="molecule type" value="Genomic_DNA"/>
</dbReference>
<dbReference type="SMR" id="Q6YQR9"/>
<dbReference type="STRING" id="262768.PAM_304"/>
<dbReference type="KEGG" id="poy:PAM_304"/>
<dbReference type="eggNOG" id="COG0816">
    <property type="taxonomic scope" value="Bacteria"/>
</dbReference>
<dbReference type="HOGENOM" id="CLU_098240_2_0_14"/>
<dbReference type="BioCyc" id="OYEL262768:G1G26-362-MONOMER"/>
<dbReference type="Proteomes" id="UP000002523">
    <property type="component" value="Chromosome"/>
</dbReference>
<dbReference type="GO" id="GO:0005829">
    <property type="term" value="C:cytosol"/>
    <property type="evidence" value="ECO:0007669"/>
    <property type="project" value="TreeGrafter"/>
</dbReference>
<dbReference type="GO" id="GO:0004518">
    <property type="term" value="F:nuclease activity"/>
    <property type="evidence" value="ECO:0007669"/>
    <property type="project" value="UniProtKB-KW"/>
</dbReference>
<dbReference type="GO" id="GO:0000967">
    <property type="term" value="P:rRNA 5'-end processing"/>
    <property type="evidence" value="ECO:0007669"/>
    <property type="project" value="UniProtKB-UniRule"/>
</dbReference>
<dbReference type="CDD" id="cd16964">
    <property type="entry name" value="YqgF"/>
    <property type="match status" value="1"/>
</dbReference>
<dbReference type="Gene3D" id="3.30.420.140">
    <property type="entry name" value="YqgF/RNase H-like domain"/>
    <property type="match status" value="1"/>
</dbReference>
<dbReference type="HAMAP" id="MF_00651">
    <property type="entry name" value="Nuclease_YqgF"/>
    <property type="match status" value="1"/>
</dbReference>
<dbReference type="InterPro" id="IPR012337">
    <property type="entry name" value="RNaseH-like_sf"/>
</dbReference>
<dbReference type="InterPro" id="IPR005227">
    <property type="entry name" value="YqgF"/>
</dbReference>
<dbReference type="InterPro" id="IPR006641">
    <property type="entry name" value="YqgF/RNaseH-like_dom"/>
</dbReference>
<dbReference type="InterPro" id="IPR037027">
    <property type="entry name" value="YqgF/RNaseH-like_dom_sf"/>
</dbReference>
<dbReference type="NCBIfam" id="TIGR00250">
    <property type="entry name" value="RNAse_H_YqgF"/>
    <property type="match status" value="1"/>
</dbReference>
<dbReference type="PANTHER" id="PTHR33317">
    <property type="entry name" value="POLYNUCLEOTIDYL TRANSFERASE, RIBONUCLEASE H-LIKE SUPERFAMILY PROTEIN"/>
    <property type="match status" value="1"/>
</dbReference>
<dbReference type="PANTHER" id="PTHR33317:SF4">
    <property type="entry name" value="POLYNUCLEOTIDYL TRANSFERASE, RIBONUCLEASE H-LIKE SUPERFAMILY PROTEIN"/>
    <property type="match status" value="1"/>
</dbReference>
<dbReference type="Pfam" id="PF03652">
    <property type="entry name" value="RuvX"/>
    <property type="match status" value="1"/>
</dbReference>
<dbReference type="SMART" id="SM00732">
    <property type="entry name" value="YqgFc"/>
    <property type="match status" value="1"/>
</dbReference>
<dbReference type="SUPFAM" id="SSF53098">
    <property type="entry name" value="Ribonuclease H-like"/>
    <property type="match status" value="1"/>
</dbReference>
<feature type="chain" id="PRO_0000172108" description="Putative pre-16S rRNA nuclease">
    <location>
        <begin position="1"/>
        <end position="151"/>
    </location>
</feature>
<accession>Q6YQR9</accession>
<gene>
    <name type="ordered locus">PAM_304</name>
</gene>
<organism>
    <name type="scientific">Onion yellows phytoplasma (strain OY-M)</name>
    <dbReference type="NCBI Taxonomy" id="262768"/>
    <lineage>
        <taxon>Bacteria</taxon>
        <taxon>Bacillati</taxon>
        <taxon>Mycoplasmatota</taxon>
        <taxon>Mollicutes</taxon>
        <taxon>Acholeplasmatales</taxon>
        <taxon>Acholeplasmataceae</taxon>
        <taxon>Candidatus Phytoplasma</taxon>
        <taxon>16SrI (Aster yellows group)</taxon>
    </lineage>
</organism>
<evidence type="ECO:0000255" key="1">
    <source>
        <dbReference type="HAMAP-Rule" id="MF_00651"/>
    </source>
</evidence>
<keyword id="KW-0963">Cytoplasm</keyword>
<keyword id="KW-0378">Hydrolase</keyword>
<keyword id="KW-0540">Nuclease</keyword>
<keyword id="KW-0690">Ribosome biogenesis</keyword>
<protein>
    <recommendedName>
        <fullName evidence="1">Putative pre-16S rRNA nuclease</fullName>
        <ecNumber evidence="1">3.1.-.-</ecNumber>
    </recommendedName>
</protein>
<sequence length="151" mass="17331">MLKCQNNASLGLDLGEKTLGIALSQTGIIAQNLKTIFFATHKYDRLIAPLQEIIFQYQIKTIVLGYPKHMNNDIGIKAKISSDFKKTLENKFEQVKVILWDERLSTVQAIQMLKTNNKKKGKILQMKDEIAATIILQNYLDYIKLHTNKEH</sequence>
<comment type="function">
    <text evidence="1">Could be a nuclease involved in processing of the 5'-end of pre-16S rRNA.</text>
</comment>
<comment type="subcellular location">
    <subcellularLocation>
        <location evidence="1">Cytoplasm</location>
    </subcellularLocation>
</comment>
<comment type="similarity">
    <text evidence="1">Belongs to the YqgF nuclease family.</text>
</comment>